<keyword id="KW-0963">Cytoplasm</keyword>
<keyword id="KW-0520">NAD</keyword>
<keyword id="KW-0560">Oxidoreductase</keyword>
<keyword id="KW-0664">Pyridoxine biosynthesis</keyword>
<organism>
    <name type="scientific">Yersinia pestis bv. Antiqua (strain Antiqua)</name>
    <dbReference type="NCBI Taxonomy" id="360102"/>
    <lineage>
        <taxon>Bacteria</taxon>
        <taxon>Pseudomonadati</taxon>
        <taxon>Pseudomonadota</taxon>
        <taxon>Gammaproteobacteria</taxon>
        <taxon>Enterobacterales</taxon>
        <taxon>Yersiniaceae</taxon>
        <taxon>Yersinia</taxon>
    </lineage>
</organism>
<protein>
    <recommendedName>
        <fullName evidence="1">Erythronate-4-phosphate dehydrogenase</fullName>
        <ecNumber evidence="1">1.1.1.290</ecNumber>
    </recommendedName>
</protein>
<accession>Q1C676</accession>
<dbReference type="EC" id="1.1.1.290" evidence="1"/>
<dbReference type="EMBL" id="CP000308">
    <property type="protein sequence ID" value="ABG14046.1"/>
    <property type="status" value="ALT_INIT"/>
    <property type="molecule type" value="Genomic_DNA"/>
</dbReference>
<dbReference type="RefSeq" id="WP_002209725.1">
    <property type="nucleotide sequence ID" value="NZ_CP009906.1"/>
</dbReference>
<dbReference type="SMR" id="Q1C676"/>
<dbReference type="GeneID" id="57975926"/>
<dbReference type="KEGG" id="ypa:YPA_2080"/>
<dbReference type="UniPathway" id="UPA00244">
    <property type="reaction ID" value="UER00310"/>
</dbReference>
<dbReference type="Proteomes" id="UP000001971">
    <property type="component" value="Chromosome"/>
</dbReference>
<dbReference type="GO" id="GO:0005829">
    <property type="term" value="C:cytosol"/>
    <property type="evidence" value="ECO:0007669"/>
    <property type="project" value="TreeGrafter"/>
</dbReference>
<dbReference type="GO" id="GO:0033711">
    <property type="term" value="F:4-phosphoerythronate dehydrogenase activity"/>
    <property type="evidence" value="ECO:0007669"/>
    <property type="project" value="UniProtKB-EC"/>
</dbReference>
<dbReference type="GO" id="GO:0051287">
    <property type="term" value="F:NAD binding"/>
    <property type="evidence" value="ECO:0007669"/>
    <property type="project" value="InterPro"/>
</dbReference>
<dbReference type="GO" id="GO:0046983">
    <property type="term" value="F:protein dimerization activity"/>
    <property type="evidence" value="ECO:0007669"/>
    <property type="project" value="InterPro"/>
</dbReference>
<dbReference type="GO" id="GO:0036001">
    <property type="term" value="P:'de novo' pyridoxal 5'-phosphate biosynthetic process"/>
    <property type="evidence" value="ECO:0007669"/>
    <property type="project" value="TreeGrafter"/>
</dbReference>
<dbReference type="GO" id="GO:0008615">
    <property type="term" value="P:pyridoxine biosynthetic process"/>
    <property type="evidence" value="ECO:0007669"/>
    <property type="project" value="UniProtKB-UniRule"/>
</dbReference>
<dbReference type="CDD" id="cd12158">
    <property type="entry name" value="ErythrP_dh"/>
    <property type="match status" value="1"/>
</dbReference>
<dbReference type="FunFam" id="3.30.1370.170:FF:000001">
    <property type="entry name" value="Erythronate-4-phosphate dehydrogenase"/>
    <property type="match status" value="1"/>
</dbReference>
<dbReference type="FunFam" id="3.40.50.720:FF:000093">
    <property type="entry name" value="Erythronate-4-phosphate dehydrogenase"/>
    <property type="match status" value="1"/>
</dbReference>
<dbReference type="Gene3D" id="3.30.1370.170">
    <property type="match status" value="1"/>
</dbReference>
<dbReference type="Gene3D" id="3.40.50.720">
    <property type="entry name" value="NAD(P)-binding Rossmann-like Domain"/>
    <property type="match status" value="2"/>
</dbReference>
<dbReference type="HAMAP" id="MF_01825">
    <property type="entry name" value="PdxB"/>
    <property type="match status" value="1"/>
</dbReference>
<dbReference type="InterPro" id="IPR006139">
    <property type="entry name" value="D-isomer_2_OHA_DH_cat_dom"/>
</dbReference>
<dbReference type="InterPro" id="IPR029753">
    <property type="entry name" value="D-isomer_DH_CS"/>
</dbReference>
<dbReference type="InterPro" id="IPR029752">
    <property type="entry name" value="D-isomer_DH_CS1"/>
</dbReference>
<dbReference type="InterPro" id="IPR006140">
    <property type="entry name" value="D-isomer_DH_NAD-bd"/>
</dbReference>
<dbReference type="InterPro" id="IPR020921">
    <property type="entry name" value="Erythronate-4-P_DHase"/>
</dbReference>
<dbReference type="InterPro" id="IPR024531">
    <property type="entry name" value="Erythronate-4-P_DHase_dimer"/>
</dbReference>
<dbReference type="InterPro" id="IPR036291">
    <property type="entry name" value="NAD(P)-bd_dom_sf"/>
</dbReference>
<dbReference type="InterPro" id="IPR038251">
    <property type="entry name" value="PdxB_dimer_sf"/>
</dbReference>
<dbReference type="NCBIfam" id="NF001309">
    <property type="entry name" value="PRK00257.1"/>
    <property type="match status" value="1"/>
</dbReference>
<dbReference type="PANTHER" id="PTHR42938">
    <property type="entry name" value="FORMATE DEHYDROGENASE 1"/>
    <property type="match status" value="1"/>
</dbReference>
<dbReference type="PANTHER" id="PTHR42938:SF9">
    <property type="entry name" value="FORMATE DEHYDROGENASE 1"/>
    <property type="match status" value="1"/>
</dbReference>
<dbReference type="Pfam" id="PF00389">
    <property type="entry name" value="2-Hacid_dh"/>
    <property type="match status" value="1"/>
</dbReference>
<dbReference type="Pfam" id="PF02826">
    <property type="entry name" value="2-Hacid_dh_C"/>
    <property type="match status" value="1"/>
</dbReference>
<dbReference type="Pfam" id="PF11890">
    <property type="entry name" value="DUF3410"/>
    <property type="match status" value="1"/>
</dbReference>
<dbReference type="SUPFAM" id="SSF52283">
    <property type="entry name" value="Formate/glycerate dehydrogenase catalytic domain-like"/>
    <property type="match status" value="1"/>
</dbReference>
<dbReference type="SUPFAM" id="SSF51735">
    <property type="entry name" value="NAD(P)-binding Rossmann-fold domains"/>
    <property type="match status" value="1"/>
</dbReference>
<dbReference type="PROSITE" id="PS00065">
    <property type="entry name" value="D_2_HYDROXYACID_DH_1"/>
    <property type="match status" value="1"/>
</dbReference>
<dbReference type="PROSITE" id="PS00671">
    <property type="entry name" value="D_2_HYDROXYACID_DH_3"/>
    <property type="match status" value="1"/>
</dbReference>
<comment type="function">
    <text evidence="1">Catalyzes the oxidation of erythronate-4-phosphate to 3-hydroxy-2-oxo-4-phosphonooxybutanoate.</text>
</comment>
<comment type="catalytic activity">
    <reaction evidence="1">
        <text>4-phospho-D-erythronate + NAD(+) = (R)-3-hydroxy-2-oxo-4-phosphooxybutanoate + NADH + H(+)</text>
        <dbReference type="Rhea" id="RHEA:18829"/>
        <dbReference type="ChEBI" id="CHEBI:15378"/>
        <dbReference type="ChEBI" id="CHEBI:57540"/>
        <dbReference type="ChEBI" id="CHEBI:57945"/>
        <dbReference type="ChEBI" id="CHEBI:58538"/>
        <dbReference type="ChEBI" id="CHEBI:58766"/>
        <dbReference type="EC" id="1.1.1.290"/>
    </reaction>
</comment>
<comment type="pathway">
    <text evidence="1">Cofactor biosynthesis; pyridoxine 5'-phosphate biosynthesis; pyridoxine 5'-phosphate from D-erythrose 4-phosphate: step 2/5.</text>
</comment>
<comment type="subunit">
    <text evidence="1">Homodimer.</text>
</comment>
<comment type="subcellular location">
    <subcellularLocation>
        <location evidence="1">Cytoplasm</location>
    </subcellularLocation>
</comment>
<comment type="similarity">
    <text evidence="1">Belongs to the D-isomer specific 2-hydroxyacid dehydrogenase family. PdxB subfamily.</text>
</comment>
<comment type="sequence caution" evidence="2">
    <conflict type="erroneous initiation">
        <sequence resource="EMBL-CDS" id="ABG14046"/>
    </conflict>
</comment>
<name>PDXB_YERPA</name>
<proteinExistence type="inferred from homology"/>
<gene>
    <name evidence="1" type="primary">pdxB</name>
    <name type="ordered locus">YPA_2080</name>
</gene>
<evidence type="ECO:0000255" key="1">
    <source>
        <dbReference type="HAMAP-Rule" id="MF_01825"/>
    </source>
</evidence>
<evidence type="ECO:0000305" key="2"/>
<sequence length="375" mass="41167">MKILVDENMPYAEELFRRLGDVQAVPGRPIPRDALVDADALMVRSVTKVNEALLHGTSIGFVGTATAGTDHVDDTWLRQQGIGFSAAPGCNAIAVVEYVFSALMMMAERDGFQLRDKTVGIIGVGNVGSRLNARLQALGVRTLLCDPPRADRGDNEAFWPLEKLVREADVLTFHTPLNKTGAYQSLHMADDELLAALPDGRILINACRGAVVDNAALLRALEKGKKLSVVLDVWEPEPDLSLPLLARVDIGTPHIAGYTLEGKARGTTQVFEAFSQHLGQPQSVELASLLPVPEFSHLRLNGELDEGKLKRLMHLVYDVRRDDAPLRHVAGLPGEFDRLRKHYQERREWSSLCVQCDDATSAGLLQQLGFTTQLL</sequence>
<reference key="1">
    <citation type="journal article" date="2006" name="J. Bacteriol.">
        <title>Complete genome sequence of Yersinia pestis strains Antiqua and Nepal516: evidence of gene reduction in an emerging pathogen.</title>
        <authorList>
            <person name="Chain P.S.G."/>
            <person name="Hu P."/>
            <person name="Malfatti S.A."/>
            <person name="Radnedge L."/>
            <person name="Larimer F."/>
            <person name="Vergez L.M."/>
            <person name="Worsham P."/>
            <person name="Chu M.C."/>
            <person name="Andersen G.L."/>
        </authorList>
    </citation>
    <scope>NUCLEOTIDE SEQUENCE [LARGE SCALE GENOMIC DNA]</scope>
    <source>
        <strain>Antiqua</strain>
    </source>
</reference>
<feature type="chain" id="PRO_0000297482" description="Erythronate-4-phosphate dehydrogenase">
    <location>
        <begin position="1"/>
        <end position="375"/>
    </location>
</feature>
<feature type="active site" evidence="1">
    <location>
        <position position="208"/>
    </location>
</feature>
<feature type="active site" evidence="1">
    <location>
        <position position="237"/>
    </location>
</feature>
<feature type="active site" description="Proton donor" evidence="1">
    <location>
        <position position="254"/>
    </location>
</feature>
<feature type="binding site" evidence="1">
    <location>
        <position position="45"/>
    </location>
    <ligand>
        <name>substrate</name>
    </ligand>
</feature>
<feature type="binding site" evidence="1">
    <location>
        <position position="66"/>
    </location>
    <ligand>
        <name>substrate</name>
    </ligand>
</feature>
<feature type="binding site" evidence="1">
    <location>
        <position position="146"/>
    </location>
    <ligand>
        <name>NAD(+)</name>
        <dbReference type="ChEBI" id="CHEBI:57540"/>
    </ligand>
</feature>
<feature type="binding site" evidence="1">
    <location>
        <position position="175"/>
    </location>
    <ligand>
        <name>NAD(+)</name>
        <dbReference type="ChEBI" id="CHEBI:57540"/>
    </ligand>
</feature>
<feature type="binding site" evidence="1">
    <location>
        <position position="232"/>
    </location>
    <ligand>
        <name>NAD(+)</name>
        <dbReference type="ChEBI" id="CHEBI:57540"/>
    </ligand>
</feature>
<feature type="binding site" evidence="1">
    <location>
        <position position="257"/>
    </location>
    <ligand>
        <name>NAD(+)</name>
        <dbReference type="ChEBI" id="CHEBI:57540"/>
    </ligand>
</feature>
<feature type="binding site" evidence="1">
    <location>
        <position position="258"/>
    </location>
    <ligand>
        <name>substrate</name>
    </ligand>
</feature>